<reference key="1">
    <citation type="journal article" date="2008" name="J. Bacteriol.">
        <title>The genome sequence of the tomato-pathogenic actinomycete Clavibacter michiganensis subsp. michiganensis NCPPB382 reveals a large island involved in pathogenicity.</title>
        <authorList>
            <person name="Gartemann K.-H."/>
            <person name="Abt B."/>
            <person name="Bekel T."/>
            <person name="Burger A."/>
            <person name="Engemann J."/>
            <person name="Fluegel M."/>
            <person name="Gaigalat L."/>
            <person name="Goesmann A."/>
            <person name="Graefen I."/>
            <person name="Kalinowski J."/>
            <person name="Kaup O."/>
            <person name="Kirchner O."/>
            <person name="Krause L."/>
            <person name="Linke B."/>
            <person name="McHardy A."/>
            <person name="Meyer F."/>
            <person name="Pohle S."/>
            <person name="Rueckert C."/>
            <person name="Schneiker S."/>
            <person name="Zellermann E.-M."/>
            <person name="Puehler A."/>
            <person name="Eichenlaub R."/>
            <person name="Kaiser O."/>
            <person name="Bartels D."/>
        </authorList>
    </citation>
    <scope>NUCLEOTIDE SEQUENCE [LARGE SCALE GENOMIC DNA]</scope>
    <source>
        <strain>NCPPB 382</strain>
    </source>
</reference>
<gene>
    <name evidence="2" type="primary">argF</name>
    <name type="ordered locus">CMM_1997</name>
</gene>
<dbReference type="EC" id="2.1.3.3" evidence="2"/>
<dbReference type="EMBL" id="AM711867">
    <property type="protein sequence ID" value="CAN02058.1"/>
    <property type="molecule type" value="Genomic_DNA"/>
</dbReference>
<dbReference type="RefSeq" id="WP_012038684.1">
    <property type="nucleotide sequence ID" value="NC_009480.1"/>
</dbReference>
<dbReference type="SMR" id="A5CSJ2"/>
<dbReference type="GeneID" id="92947990"/>
<dbReference type="KEGG" id="cmi:CMM_1997"/>
<dbReference type="eggNOG" id="COG0078">
    <property type="taxonomic scope" value="Bacteria"/>
</dbReference>
<dbReference type="HOGENOM" id="CLU_043846_3_2_11"/>
<dbReference type="OrthoDB" id="9802587at2"/>
<dbReference type="UniPathway" id="UPA00068">
    <property type="reaction ID" value="UER00112"/>
</dbReference>
<dbReference type="Proteomes" id="UP000001564">
    <property type="component" value="Chromosome"/>
</dbReference>
<dbReference type="GO" id="GO:0005737">
    <property type="term" value="C:cytoplasm"/>
    <property type="evidence" value="ECO:0007669"/>
    <property type="project" value="UniProtKB-SubCell"/>
</dbReference>
<dbReference type="GO" id="GO:0016597">
    <property type="term" value="F:amino acid binding"/>
    <property type="evidence" value="ECO:0007669"/>
    <property type="project" value="InterPro"/>
</dbReference>
<dbReference type="GO" id="GO:0004585">
    <property type="term" value="F:ornithine carbamoyltransferase activity"/>
    <property type="evidence" value="ECO:0007669"/>
    <property type="project" value="UniProtKB-UniRule"/>
</dbReference>
<dbReference type="GO" id="GO:0042450">
    <property type="term" value="P:arginine biosynthetic process via ornithine"/>
    <property type="evidence" value="ECO:0007669"/>
    <property type="project" value="TreeGrafter"/>
</dbReference>
<dbReference type="GO" id="GO:0019240">
    <property type="term" value="P:citrulline biosynthetic process"/>
    <property type="evidence" value="ECO:0007669"/>
    <property type="project" value="TreeGrafter"/>
</dbReference>
<dbReference type="GO" id="GO:0006526">
    <property type="term" value="P:L-arginine biosynthetic process"/>
    <property type="evidence" value="ECO:0007669"/>
    <property type="project" value="UniProtKB-UniRule"/>
</dbReference>
<dbReference type="FunFam" id="3.40.50.1370:FF:000008">
    <property type="entry name" value="Ornithine carbamoyltransferase"/>
    <property type="match status" value="1"/>
</dbReference>
<dbReference type="Gene3D" id="3.40.50.1370">
    <property type="entry name" value="Aspartate/ornithine carbamoyltransferase"/>
    <property type="match status" value="2"/>
</dbReference>
<dbReference type="HAMAP" id="MF_01109">
    <property type="entry name" value="OTCase"/>
    <property type="match status" value="1"/>
</dbReference>
<dbReference type="InterPro" id="IPR006132">
    <property type="entry name" value="Asp/Orn_carbamoyltranf_P-bd"/>
</dbReference>
<dbReference type="InterPro" id="IPR006130">
    <property type="entry name" value="Asp/Orn_carbamoylTrfase"/>
</dbReference>
<dbReference type="InterPro" id="IPR036901">
    <property type="entry name" value="Asp/Orn_carbamoylTrfase_sf"/>
</dbReference>
<dbReference type="InterPro" id="IPR006131">
    <property type="entry name" value="Asp_carbamoyltransf_Asp/Orn-bd"/>
</dbReference>
<dbReference type="InterPro" id="IPR002292">
    <property type="entry name" value="Orn/put_carbamltrans"/>
</dbReference>
<dbReference type="InterPro" id="IPR024904">
    <property type="entry name" value="OTCase_ArgI"/>
</dbReference>
<dbReference type="NCBIfam" id="TIGR00658">
    <property type="entry name" value="orni_carb_tr"/>
    <property type="match status" value="1"/>
</dbReference>
<dbReference type="NCBIfam" id="NF001986">
    <property type="entry name" value="PRK00779.1"/>
    <property type="match status" value="1"/>
</dbReference>
<dbReference type="PANTHER" id="PTHR45753">
    <property type="entry name" value="ORNITHINE CARBAMOYLTRANSFERASE, MITOCHONDRIAL"/>
    <property type="match status" value="1"/>
</dbReference>
<dbReference type="PANTHER" id="PTHR45753:SF3">
    <property type="entry name" value="ORNITHINE TRANSCARBAMYLASE, MITOCHONDRIAL"/>
    <property type="match status" value="1"/>
</dbReference>
<dbReference type="Pfam" id="PF00185">
    <property type="entry name" value="OTCace"/>
    <property type="match status" value="1"/>
</dbReference>
<dbReference type="Pfam" id="PF02729">
    <property type="entry name" value="OTCace_N"/>
    <property type="match status" value="1"/>
</dbReference>
<dbReference type="PRINTS" id="PR00100">
    <property type="entry name" value="AOTCASE"/>
</dbReference>
<dbReference type="PRINTS" id="PR00102">
    <property type="entry name" value="OTCASE"/>
</dbReference>
<dbReference type="SUPFAM" id="SSF53671">
    <property type="entry name" value="Aspartate/ornithine carbamoyltransferase"/>
    <property type="match status" value="1"/>
</dbReference>
<dbReference type="PROSITE" id="PS00097">
    <property type="entry name" value="CARBAMOYLTRANSFERASE"/>
    <property type="match status" value="1"/>
</dbReference>
<comment type="function">
    <text evidence="1">Reversibly catalyzes the transfer of the carbamoyl group from carbamoyl phosphate (CP) to the N(epsilon) atom of ornithine (ORN) to produce L-citrulline.</text>
</comment>
<comment type="catalytic activity">
    <reaction evidence="2">
        <text>carbamoyl phosphate + L-ornithine = L-citrulline + phosphate + H(+)</text>
        <dbReference type="Rhea" id="RHEA:19513"/>
        <dbReference type="ChEBI" id="CHEBI:15378"/>
        <dbReference type="ChEBI" id="CHEBI:43474"/>
        <dbReference type="ChEBI" id="CHEBI:46911"/>
        <dbReference type="ChEBI" id="CHEBI:57743"/>
        <dbReference type="ChEBI" id="CHEBI:58228"/>
        <dbReference type="EC" id="2.1.3.3"/>
    </reaction>
</comment>
<comment type="pathway">
    <text evidence="2">Amino-acid biosynthesis; L-arginine biosynthesis; L-arginine from L-ornithine and carbamoyl phosphate: step 1/3.</text>
</comment>
<comment type="subcellular location">
    <subcellularLocation>
        <location evidence="2">Cytoplasm</location>
    </subcellularLocation>
</comment>
<comment type="similarity">
    <text evidence="2">Belongs to the aspartate/ornithine carbamoyltransferase superfamily. OTCase family.</text>
</comment>
<proteinExistence type="inferred from homology"/>
<sequence>MTRHFLRDDDLSPAEQAEVLDLAVQLKRERWSERPLAGPQTVAVIFDKSSTRTRVSFAVGIADLGGVPLIISTANSQLGGKETASDTARVLERQVAAIVWRTYGQAGLEEMAAGTTVPVVNALSDDFHPCQLLADLLTIREHRGDPAGQTLTFLGDGACNMAQSYLLAGATAGMHVRIAAPAGYVPSEAVVADAERIAASTGGSVRVLTDPVEAVSGADVVVTDTWVSMGREEEKAQRLAELGAYQVTTELMEHAVDDAIFLHCLPADREYEVASEVIDGPRSVVWDEAENRLHAQKALLVWLLRQS</sequence>
<organism>
    <name type="scientific">Clavibacter michiganensis subsp. michiganensis (strain NCPPB 382)</name>
    <dbReference type="NCBI Taxonomy" id="443906"/>
    <lineage>
        <taxon>Bacteria</taxon>
        <taxon>Bacillati</taxon>
        <taxon>Actinomycetota</taxon>
        <taxon>Actinomycetes</taxon>
        <taxon>Micrococcales</taxon>
        <taxon>Microbacteriaceae</taxon>
        <taxon>Clavibacter</taxon>
    </lineage>
</organism>
<accession>A5CSJ2</accession>
<name>OTC_CLAM3</name>
<evidence type="ECO:0000250" key="1"/>
<evidence type="ECO:0000255" key="2">
    <source>
        <dbReference type="HAMAP-Rule" id="MF_01109"/>
    </source>
</evidence>
<feature type="chain" id="PRO_1000084841" description="Ornithine carbamoyltransferase">
    <location>
        <begin position="1"/>
        <end position="307"/>
    </location>
</feature>
<feature type="binding site" evidence="2">
    <location>
        <begin position="50"/>
        <end position="53"/>
    </location>
    <ligand>
        <name>carbamoyl phosphate</name>
        <dbReference type="ChEBI" id="CHEBI:58228"/>
    </ligand>
</feature>
<feature type="binding site" evidence="2">
    <location>
        <position position="77"/>
    </location>
    <ligand>
        <name>carbamoyl phosphate</name>
        <dbReference type="ChEBI" id="CHEBI:58228"/>
    </ligand>
</feature>
<feature type="binding site" evidence="2">
    <location>
        <position position="101"/>
    </location>
    <ligand>
        <name>carbamoyl phosphate</name>
        <dbReference type="ChEBI" id="CHEBI:58228"/>
    </ligand>
</feature>
<feature type="binding site" evidence="2">
    <location>
        <begin position="128"/>
        <end position="131"/>
    </location>
    <ligand>
        <name>carbamoyl phosphate</name>
        <dbReference type="ChEBI" id="CHEBI:58228"/>
    </ligand>
</feature>
<feature type="binding site" evidence="2">
    <location>
        <position position="160"/>
    </location>
    <ligand>
        <name>L-ornithine</name>
        <dbReference type="ChEBI" id="CHEBI:46911"/>
    </ligand>
</feature>
<feature type="binding site" evidence="2">
    <location>
        <position position="224"/>
    </location>
    <ligand>
        <name>L-ornithine</name>
        <dbReference type="ChEBI" id="CHEBI:46911"/>
    </ligand>
</feature>
<feature type="binding site" evidence="2">
    <location>
        <begin position="228"/>
        <end position="229"/>
    </location>
    <ligand>
        <name>L-ornithine</name>
        <dbReference type="ChEBI" id="CHEBI:46911"/>
    </ligand>
</feature>
<feature type="binding site" evidence="2">
    <location>
        <begin position="264"/>
        <end position="265"/>
    </location>
    <ligand>
        <name>carbamoyl phosphate</name>
        <dbReference type="ChEBI" id="CHEBI:58228"/>
    </ligand>
</feature>
<feature type="binding site" evidence="2">
    <location>
        <position position="292"/>
    </location>
    <ligand>
        <name>carbamoyl phosphate</name>
        <dbReference type="ChEBI" id="CHEBI:58228"/>
    </ligand>
</feature>
<protein>
    <recommendedName>
        <fullName evidence="2">Ornithine carbamoyltransferase</fullName>
        <shortName evidence="2">OTCase</shortName>
        <ecNumber evidence="2">2.1.3.3</ecNumber>
    </recommendedName>
</protein>
<keyword id="KW-0028">Amino-acid biosynthesis</keyword>
<keyword id="KW-0055">Arginine biosynthesis</keyword>
<keyword id="KW-0963">Cytoplasm</keyword>
<keyword id="KW-0808">Transferase</keyword>